<dbReference type="EC" id="3.6.1.-" evidence="1"/>
<dbReference type="EC" id="3.6.1.22" evidence="1"/>
<dbReference type="EMBL" id="CP001113">
    <property type="protein sequence ID" value="ACF63115.1"/>
    <property type="molecule type" value="Genomic_DNA"/>
</dbReference>
<dbReference type="RefSeq" id="WP_000373958.1">
    <property type="nucleotide sequence ID" value="NZ_CCMR01000001.1"/>
</dbReference>
<dbReference type="SMR" id="B4T0Z8"/>
<dbReference type="KEGG" id="see:SNSL254_A4499"/>
<dbReference type="HOGENOM" id="CLU_037162_0_1_6"/>
<dbReference type="Proteomes" id="UP000008824">
    <property type="component" value="Chromosome"/>
</dbReference>
<dbReference type="GO" id="GO:0005829">
    <property type="term" value="C:cytosol"/>
    <property type="evidence" value="ECO:0007669"/>
    <property type="project" value="TreeGrafter"/>
</dbReference>
<dbReference type="GO" id="GO:0000287">
    <property type="term" value="F:magnesium ion binding"/>
    <property type="evidence" value="ECO:0007669"/>
    <property type="project" value="UniProtKB-UniRule"/>
</dbReference>
<dbReference type="GO" id="GO:0030145">
    <property type="term" value="F:manganese ion binding"/>
    <property type="evidence" value="ECO:0007669"/>
    <property type="project" value="UniProtKB-UniRule"/>
</dbReference>
<dbReference type="GO" id="GO:0000210">
    <property type="term" value="F:NAD+ diphosphatase activity"/>
    <property type="evidence" value="ECO:0007669"/>
    <property type="project" value="UniProtKB-UniRule"/>
</dbReference>
<dbReference type="GO" id="GO:0035529">
    <property type="term" value="F:NADH pyrophosphatase activity"/>
    <property type="evidence" value="ECO:0007669"/>
    <property type="project" value="TreeGrafter"/>
</dbReference>
<dbReference type="GO" id="GO:0110153">
    <property type="term" value="F:RNA NAD-cap (NMN-forming) hydrolase activity"/>
    <property type="evidence" value="ECO:0007669"/>
    <property type="project" value="RHEA"/>
</dbReference>
<dbReference type="GO" id="GO:0008270">
    <property type="term" value="F:zinc ion binding"/>
    <property type="evidence" value="ECO:0007669"/>
    <property type="project" value="UniProtKB-UniRule"/>
</dbReference>
<dbReference type="GO" id="GO:0019677">
    <property type="term" value="P:NAD catabolic process"/>
    <property type="evidence" value="ECO:0007669"/>
    <property type="project" value="TreeGrafter"/>
</dbReference>
<dbReference type="GO" id="GO:0006734">
    <property type="term" value="P:NADH metabolic process"/>
    <property type="evidence" value="ECO:0007669"/>
    <property type="project" value="TreeGrafter"/>
</dbReference>
<dbReference type="GO" id="GO:0006742">
    <property type="term" value="P:NADP catabolic process"/>
    <property type="evidence" value="ECO:0007669"/>
    <property type="project" value="TreeGrafter"/>
</dbReference>
<dbReference type="CDD" id="cd03429">
    <property type="entry name" value="NUDIX_NADH_pyrophosphatase_Nudt13"/>
    <property type="match status" value="1"/>
</dbReference>
<dbReference type="FunFam" id="3.90.79.10:FF:000004">
    <property type="entry name" value="NADH pyrophosphatase"/>
    <property type="match status" value="1"/>
</dbReference>
<dbReference type="FunFam" id="3.90.79.20:FF:000001">
    <property type="entry name" value="NADH pyrophosphatase"/>
    <property type="match status" value="1"/>
</dbReference>
<dbReference type="Gene3D" id="3.90.79.20">
    <property type="match status" value="1"/>
</dbReference>
<dbReference type="Gene3D" id="3.90.79.10">
    <property type="entry name" value="Nucleoside Triphosphate Pyrophosphohydrolase"/>
    <property type="match status" value="1"/>
</dbReference>
<dbReference type="HAMAP" id="MF_00297">
    <property type="entry name" value="Nudix_NudC"/>
    <property type="match status" value="1"/>
</dbReference>
<dbReference type="InterPro" id="IPR050241">
    <property type="entry name" value="NAD-cap_RNA_hydrolase_NudC"/>
</dbReference>
<dbReference type="InterPro" id="IPR049734">
    <property type="entry name" value="NudC-like_C"/>
</dbReference>
<dbReference type="InterPro" id="IPR015797">
    <property type="entry name" value="NUDIX_hydrolase-like_dom_sf"/>
</dbReference>
<dbReference type="InterPro" id="IPR020084">
    <property type="entry name" value="NUDIX_hydrolase_CS"/>
</dbReference>
<dbReference type="InterPro" id="IPR000086">
    <property type="entry name" value="NUDIX_hydrolase_dom"/>
</dbReference>
<dbReference type="InterPro" id="IPR022925">
    <property type="entry name" value="RNA_Hydrolase_NudC"/>
</dbReference>
<dbReference type="InterPro" id="IPR015376">
    <property type="entry name" value="Znr_NADH_PPase"/>
</dbReference>
<dbReference type="NCBIfam" id="NF001299">
    <property type="entry name" value="PRK00241.1"/>
    <property type="match status" value="1"/>
</dbReference>
<dbReference type="PANTHER" id="PTHR42904:SF6">
    <property type="entry name" value="NAD-CAPPED RNA HYDROLASE NUDT12"/>
    <property type="match status" value="1"/>
</dbReference>
<dbReference type="PANTHER" id="PTHR42904">
    <property type="entry name" value="NUDIX HYDROLASE, NUDC SUBFAMILY"/>
    <property type="match status" value="1"/>
</dbReference>
<dbReference type="Pfam" id="PF00293">
    <property type="entry name" value="NUDIX"/>
    <property type="match status" value="1"/>
</dbReference>
<dbReference type="Pfam" id="PF09297">
    <property type="entry name" value="Zn_ribbon_NUD"/>
    <property type="match status" value="1"/>
</dbReference>
<dbReference type="SUPFAM" id="SSF55811">
    <property type="entry name" value="Nudix"/>
    <property type="match status" value="2"/>
</dbReference>
<dbReference type="PROSITE" id="PS51462">
    <property type="entry name" value="NUDIX"/>
    <property type="match status" value="1"/>
</dbReference>
<dbReference type="PROSITE" id="PS00893">
    <property type="entry name" value="NUDIX_BOX"/>
    <property type="match status" value="1"/>
</dbReference>
<reference key="1">
    <citation type="journal article" date="2011" name="J. Bacteriol.">
        <title>Comparative genomics of 28 Salmonella enterica isolates: evidence for CRISPR-mediated adaptive sublineage evolution.</title>
        <authorList>
            <person name="Fricke W.F."/>
            <person name="Mammel M.K."/>
            <person name="McDermott P.F."/>
            <person name="Tartera C."/>
            <person name="White D.G."/>
            <person name="Leclerc J.E."/>
            <person name="Ravel J."/>
            <person name="Cebula T.A."/>
        </authorList>
    </citation>
    <scope>NUCLEOTIDE SEQUENCE [LARGE SCALE GENOMIC DNA]</scope>
    <source>
        <strain>SL254</strain>
    </source>
</reference>
<feature type="chain" id="PRO_1000115251" description="NAD-capped RNA hydrolase NudC">
    <location>
        <begin position="1"/>
        <end position="257"/>
    </location>
</feature>
<feature type="domain" description="Nudix hydrolase" evidence="1">
    <location>
        <begin position="125"/>
        <end position="248"/>
    </location>
</feature>
<feature type="short sequence motif" description="Nudix box" evidence="1">
    <location>
        <begin position="159"/>
        <end position="180"/>
    </location>
</feature>
<feature type="binding site" evidence="1">
    <location>
        <position position="69"/>
    </location>
    <ligand>
        <name>substrate</name>
    </ligand>
</feature>
<feature type="binding site" evidence="1">
    <location>
        <position position="98"/>
    </location>
    <ligand>
        <name>Zn(2+)</name>
        <dbReference type="ChEBI" id="CHEBI:29105"/>
    </ligand>
</feature>
<feature type="binding site" evidence="1">
    <location>
        <position position="101"/>
    </location>
    <ligand>
        <name>Zn(2+)</name>
        <dbReference type="ChEBI" id="CHEBI:29105"/>
    </ligand>
</feature>
<feature type="binding site" evidence="1">
    <location>
        <position position="111"/>
    </location>
    <ligand>
        <name>substrate</name>
    </ligand>
</feature>
<feature type="binding site" evidence="1">
    <location>
        <position position="116"/>
    </location>
    <ligand>
        <name>Zn(2+)</name>
        <dbReference type="ChEBI" id="CHEBI:29105"/>
    </ligand>
</feature>
<feature type="binding site" evidence="1">
    <location>
        <position position="119"/>
    </location>
    <ligand>
        <name>Zn(2+)</name>
        <dbReference type="ChEBI" id="CHEBI:29105"/>
    </ligand>
</feature>
<feature type="binding site" evidence="1">
    <location>
        <position position="124"/>
    </location>
    <ligand>
        <name>substrate</name>
    </ligand>
</feature>
<feature type="binding site" evidence="1">
    <location>
        <position position="158"/>
    </location>
    <ligand>
        <name>a divalent metal cation</name>
        <dbReference type="ChEBI" id="CHEBI:60240"/>
        <label>1</label>
    </ligand>
</feature>
<feature type="binding site" evidence="1">
    <location>
        <position position="174"/>
    </location>
    <ligand>
        <name>a divalent metal cation</name>
        <dbReference type="ChEBI" id="CHEBI:60240"/>
        <label>2</label>
    </ligand>
</feature>
<feature type="binding site" evidence="1">
    <location>
        <position position="174"/>
    </location>
    <ligand>
        <name>a divalent metal cation</name>
        <dbReference type="ChEBI" id="CHEBI:60240"/>
        <label>3</label>
    </ligand>
</feature>
<feature type="binding site" evidence="1">
    <location>
        <position position="178"/>
    </location>
    <ligand>
        <name>a divalent metal cation</name>
        <dbReference type="ChEBI" id="CHEBI:60240"/>
        <label>1</label>
    </ligand>
</feature>
<feature type="binding site" evidence="1">
    <location>
        <position position="178"/>
    </location>
    <ligand>
        <name>a divalent metal cation</name>
        <dbReference type="ChEBI" id="CHEBI:60240"/>
        <label>3</label>
    </ligand>
</feature>
<feature type="binding site" evidence="1">
    <location>
        <begin position="192"/>
        <end position="199"/>
    </location>
    <ligand>
        <name>substrate</name>
    </ligand>
</feature>
<feature type="binding site" evidence="1">
    <location>
        <position position="219"/>
    </location>
    <ligand>
        <name>a divalent metal cation</name>
        <dbReference type="ChEBI" id="CHEBI:60240"/>
        <label>1</label>
    </ligand>
</feature>
<feature type="binding site" evidence="1">
    <location>
        <position position="219"/>
    </location>
    <ligand>
        <name>a divalent metal cation</name>
        <dbReference type="ChEBI" id="CHEBI:60240"/>
        <label>3</label>
    </ligand>
</feature>
<feature type="binding site" evidence="1">
    <location>
        <position position="241"/>
    </location>
    <ligand>
        <name>substrate</name>
    </ligand>
</feature>
<name>NUDC_SALNS</name>
<organism>
    <name type="scientific">Salmonella newport (strain SL254)</name>
    <dbReference type="NCBI Taxonomy" id="423368"/>
    <lineage>
        <taxon>Bacteria</taxon>
        <taxon>Pseudomonadati</taxon>
        <taxon>Pseudomonadota</taxon>
        <taxon>Gammaproteobacteria</taxon>
        <taxon>Enterobacterales</taxon>
        <taxon>Enterobacteriaceae</taxon>
        <taxon>Salmonella</taxon>
    </lineage>
</organism>
<keyword id="KW-0378">Hydrolase</keyword>
<keyword id="KW-0460">Magnesium</keyword>
<keyword id="KW-0464">Manganese</keyword>
<keyword id="KW-0479">Metal-binding</keyword>
<keyword id="KW-0520">NAD</keyword>
<keyword id="KW-0862">Zinc</keyword>
<accession>B4T0Z8</accession>
<evidence type="ECO:0000255" key="1">
    <source>
        <dbReference type="HAMAP-Rule" id="MF_00297"/>
    </source>
</evidence>
<comment type="function">
    <text evidence="1">mRNA decapping enzyme that specifically removes the nicotinamide adenine dinucleotide (NAD) cap from a subset of mRNAs by hydrolyzing the diphosphate linkage to produce nicotinamide mononucleotide (NMN) and 5' monophosphate mRNA. The NAD-cap is present at the 5'-end of some mRNAs and stabilizes RNA against 5'-processing. Has preference for mRNAs with a 5'-end purine. Catalyzes the hydrolysis of a broad range of dinucleotide pyrophosphates.</text>
</comment>
<comment type="catalytic activity">
    <reaction evidence="1">
        <text>a 5'-end NAD(+)-phospho-ribonucleoside in mRNA + H2O = a 5'-end phospho-adenosine-phospho-ribonucleoside in mRNA + beta-nicotinamide D-ribonucleotide + 2 H(+)</text>
        <dbReference type="Rhea" id="RHEA:60876"/>
        <dbReference type="Rhea" id="RHEA-COMP:15698"/>
        <dbReference type="Rhea" id="RHEA-COMP:15719"/>
        <dbReference type="ChEBI" id="CHEBI:14649"/>
        <dbReference type="ChEBI" id="CHEBI:15377"/>
        <dbReference type="ChEBI" id="CHEBI:15378"/>
        <dbReference type="ChEBI" id="CHEBI:144029"/>
        <dbReference type="ChEBI" id="CHEBI:144051"/>
    </reaction>
    <physiologicalReaction direction="left-to-right" evidence="1">
        <dbReference type="Rhea" id="RHEA:60877"/>
    </physiologicalReaction>
</comment>
<comment type="catalytic activity">
    <reaction evidence="1">
        <text>NAD(+) + H2O = beta-nicotinamide D-ribonucleotide + AMP + 2 H(+)</text>
        <dbReference type="Rhea" id="RHEA:11800"/>
        <dbReference type="ChEBI" id="CHEBI:14649"/>
        <dbReference type="ChEBI" id="CHEBI:15377"/>
        <dbReference type="ChEBI" id="CHEBI:15378"/>
        <dbReference type="ChEBI" id="CHEBI:57540"/>
        <dbReference type="ChEBI" id="CHEBI:456215"/>
        <dbReference type="EC" id="3.6.1.22"/>
    </reaction>
</comment>
<comment type="catalytic activity">
    <reaction evidence="1">
        <text>NADH + H2O = reduced beta-nicotinamide D-ribonucleotide + AMP + 2 H(+)</text>
        <dbReference type="Rhea" id="RHEA:48868"/>
        <dbReference type="ChEBI" id="CHEBI:15377"/>
        <dbReference type="ChEBI" id="CHEBI:15378"/>
        <dbReference type="ChEBI" id="CHEBI:57945"/>
        <dbReference type="ChEBI" id="CHEBI:90832"/>
        <dbReference type="ChEBI" id="CHEBI:456215"/>
        <dbReference type="EC" id="3.6.1.22"/>
    </reaction>
</comment>
<comment type="cofactor">
    <cofactor evidence="1">
        <name>Mg(2+)</name>
        <dbReference type="ChEBI" id="CHEBI:18420"/>
    </cofactor>
    <cofactor evidence="1">
        <name>Mn(2+)</name>
        <dbReference type="ChEBI" id="CHEBI:29035"/>
    </cofactor>
    <text evidence="1">Divalent metal cations. Mg(2+) or Mn(2+).</text>
</comment>
<comment type="cofactor">
    <cofactor evidence="1">
        <name>Zn(2+)</name>
        <dbReference type="ChEBI" id="CHEBI:29105"/>
    </cofactor>
    <text evidence="1">Binds 1 zinc ion per subunit.</text>
</comment>
<comment type="subunit">
    <text evidence="1">Homodimer.</text>
</comment>
<comment type="similarity">
    <text evidence="1">Belongs to the Nudix hydrolase family. NudC subfamily.</text>
</comment>
<protein>
    <recommendedName>
        <fullName evidence="1">NAD-capped RNA hydrolase NudC</fullName>
        <shortName evidence="1">DeNADding enzyme NudC</shortName>
        <ecNumber evidence="1">3.6.1.-</ecNumber>
    </recommendedName>
    <alternativeName>
        <fullName evidence="1">NADH pyrophosphatase</fullName>
        <ecNumber evidence="1">3.6.1.22</ecNumber>
    </alternativeName>
</protein>
<sequence length="257" mass="29607">MDRIIEKLESGWWIVSHEQKLWLPYGELPHGLAANFDLVGQRALRIGEWQGEPVWLVLQHRRHDMGSVRQVIDQDAGLFQLAGRGVQLAEFYRSHKFCGYCGHPMHPSKTEWAMLCSHCRERYYPQIAPCIIVAIRREDSILLAQHVRHRNGVHTVLAGFVEVGETLEQAVAREVMEESGIKVKNLRYVTSQPWPFPQSLMTAFMAEYDSGEIVIDPKELLEANWYRYDDLPLLPPPGTVARRLIEDTVAMCRAEYD</sequence>
<proteinExistence type="inferred from homology"/>
<gene>
    <name evidence="1" type="primary">nudC</name>
    <name type="ordered locus">SNSL254_A4499</name>
</gene>